<gene>
    <name type="primary">PFKP</name>
</gene>
<name>PFKAP_PONAB</name>
<feature type="chain" id="PRO_0000284442" description="ATP-dependent 6-phosphofructokinase, platelet type">
    <location>
        <begin position="1"/>
        <end position="784"/>
    </location>
</feature>
<feature type="region of interest" description="N-terminal catalytic PFK domain 1">
    <location>
        <begin position="1"/>
        <end position="399"/>
    </location>
</feature>
<feature type="region of interest" description="Interdomain linker">
    <location>
        <begin position="400"/>
        <end position="411"/>
    </location>
</feature>
<feature type="region of interest" description="C-terminal regulatory PFK domain 2">
    <location>
        <begin position="412"/>
        <end position="784"/>
    </location>
</feature>
<feature type="active site" description="Proton acceptor" evidence="5">
    <location>
        <position position="175"/>
    </location>
</feature>
<feature type="binding site" evidence="5">
    <location>
        <position position="34"/>
    </location>
    <ligand>
        <name>ATP</name>
        <dbReference type="ChEBI" id="CHEBI:30616"/>
    </ligand>
</feature>
<feature type="binding site" evidence="5">
    <location>
        <begin position="97"/>
        <end position="98"/>
    </location>
    <ligand>
        <name>ATP</name>
        <dbReference type="ChEBI" id="CHEBI:30616"/>
    </ligand>
</feature>
<feature type="binding site" evidence="5">
    <location>
        <begin position="127"/>
        <end position="130"/>
    </location>
    <ligand>
        <name>ATP</name>
        <dbReference type="ChEBI" id="CHEBI:30616"/>
    </ligand>
</feature>
<feature type="binding site" evidence="5">
    <location>
        <position position="128"/>
    </location>
    <ligand>
        <name>Mg(2+)</name>
        <dbReference type="ChEBI" id="CHEBI:18420"/>
        <note>catalytic</note>
    </ligand>
</feature>
<feature type="binding site" description="in other chain" evidence="5">
    <location>
        <begin position="173"/>
        <end position="175"/>
    </location>
    <ligand>
        <name>substrate</name>
        <note>ligand shared between dimeric partners</note>
    </ligand>
</feature>
<feature type="binding site" evidence="5">
    <location>
        <position position="210"/>
    </location>
    <ligand>
        <name>substrate</name>
        <note>ligand shared between dimeric partners</note>
    </ligand>
</feature>
<feature type="binding site" description="in other chain" evidence="5">
    <location>
        <begin position="217"/>
        <end position="219"/>
    </location>
    <ligand>
        <name>substrate</name>
        <note>ligand shared between dimeric partners</note>
    </ligand>
</feature>
<feature type="binding site" description="in other chain" evidence="5">
    <location>
        <position position="273"/>
    </location>
    <ligand>
        <name>substrate</name>
        <note>ligand shared between dimeric partners</note>
    </ligand>
</feature>
<feature type="binding site" evidence="5">
    <location>
        <position position="301"/>
    </location>
    <ligand>
        <name>substrate</name>
        <note>ligand shared between dimeric partners</note>
    </ligand>
</feature>
<feature type="binding site" description="in other chain" evidence="5">
    <location>
        <begin position="307"/>
        <end position="310"/>
    </location>
    <ligand>
        <name>substrate</name>
        <note>ligand shared between dimeric partners</note>
    </ligand>
</feature>
<feature type="binding site" description="in other chain" evidence="5">
    <location>
        <position position="481"/>
    </location>
    <ligand>
        <name>beta-D-fructose 2,6-bisphosphate</name>
        <dbReference type="ChEBI" id="CHEBI:58579"/>
        <note>allosteric activator; ligand shared between dimeric partners</note>
    </ligand>
</feature>
<feature type="binding site" description="in other chain" evidence="5">
    <location>
        <begin position="538"/>
        <end position="542"/>
    </location>
    <ligand>
        <name>beta-D-fructose 2,6-bisphosphate</name>
        <dbReference type="ChEBI" id="CHEBI:58579"/>
        <note>allosteric activator; ligand shared between dimeric partners</note>
    </ligand>
</feature>
<feature type="binding site" evidence="5">
    <location>
        <position position="576"/>
    </location>
    <ligand>
        <name>beta-D-fructose 2,6-bisphosphate</name>
        <dbReference type="ChEBI" id="CHEBI:58579"/>
        <note>allosteric activator; ligand shared between dimeric partners</note>
    </ligand>
</feature>
<feature type="binding site" description="in other chain" evidence="5">
    <location>
        <begin position="583"/>
        <end position="585"/>
    </location>
    <ligand>
        <name>beta-D-fructose 2,6-bisphosphate</name>
        <dbReference type="ChEBI" id="CHEBI:58579"/>
        <note>allosteric activator; ligand shared between dimeric partners</note>
    </ligand>
</feature>
<feature type="binding site" description="in other chain" evidence="5">
    <location>
        <position position="639"/>
    </location>
    <ligand>
        <name>beta-D-fructose 2,6-bisphosphate</name>
        <dbReference type="ChEBI" id="CHEBI:58579"/>
        <note>allosteric activator; ligand shared between dimeric partners</note>
    </ligand>
</feature>
<feature type="binding site" evidence="5">
    <location>
        <position position="665"/>
    </location>
    <ligand>
        <name>beta-D-fructose 2,6-bisphosphate</name>
        <dbReference type="ChEBI" id="CHEBI:58579"/>
        <note>allosteric activator; ligand shared between dimeric partners</note>
    </ligand>
</feature>
<feature type="binding site" description="in other chain" evidence="5">
    <location>
        <begin position="671"/>
        <end position="674"/>
    </location>
    <ligand>
        <name>beta-D-fructose 2,6-bisphosphate</name>
        <dbReference type="ChEBI" id="CHEBI:58579"/>
        <note>allosteric activator; ligand shared between dimeric partners</note>
    </ligand>
</feature>
<feature type="binding site" description="in other chain" evidence="5">
    <location>
        <position position="744"/>
    </location>
    <ligand>
        <name>beta-D-fructose 2,6-bisphosphate</name>
        <dbReference type="ChEBI" id="CHEBI:58579"/>
        <note>allosteric activator; ligand shared between dimeric partners</note>
    </ligand>
</feature>
<feature type="modified residue" description="N-acetylmethionine" evidence="4">
    <location>
        <position position="1"/>
    </location>
</feature>
<feature type="modified residue" description="Phosphoserine" evidence="4">
    <location>
        <position position="6"/>
    </location>
</feature>
<feature type="modified residue" description="Phosphoserine" evidence="2">
    <location>
        <position position="12"/>
    </location>
</feature>
<feature type="modified residue" description="Phosphoserine" evidence="4">
    <location>
        <position position="21"/>
    </location>
</feature>
<feature type="modified residue" description="Phosphoserine" evidence="3">
    <location>
        <position position="142"/>
    </location>
</feature>
<feature type="modified residue" description="Phosphoserine" evidence="4">
    <location>
        <position position="386"/>
    </location>
</feature>
<feature type="modified residue" description="N6-acetyllysine" evidence="4">
    <location>
        <position position="395"/>
    </location>
</feature>
<feature type="modified residue" description="N6-acetyllysine" evidence="4">
    <location>
        <position position="486"/>
    </location>
</feature>
<feature type="modified residue" description="Phosphotyrosine" evidence="4">
    <location>
        <position position="651"/>
    </location>
</feature>
<feature type="modified residue" description="N6-acetyllysine" evidence="4">
    <location>
        <position position="688"/>
    </location>
</feature>
<feature type="modified residue" description="Phosphoserine" evidence="4">
    <location>
        <position position="783"/>
    </location>
</feature>
<feature type="glycosylation site" description="O-linked (GlcNAc) serine" evidence="1">
    <location>
        <position position="540"/>
    </location>
</feature>
<proteinExistence type="evidence at transcript level"/>
<accession>Q5R636</accession>
<sequence>MDADDSRAPKGSLRKFLEHLSGAGKAIGVLTSGGDAQGMNAAVRAVVRMGIYVGAKVCFIYEGYQGMVDGGSNIAEADWESVSSILQVGGTIIGSARCQAFRTREGRLKAACNLLQRGITNLCVIGGDGSLTGANLFRKEWSGLLEELARNGQIDKEAVQKYAYLNVVGMVGSIDNDFCGTDMTIGTDSALHRIIEVVDAIMTTAQSHQRTFVLEVMGRHCGYLALVSALACGADWVFLPESPPEEGWEEQMCVKLSENRARKKRLNIIIVAEGAIDTQNKPITSEKIKELVVTQLGYDTRVTILGHVQRGGTPSAFDRILASRMGVEAVIALLEATPDTPACVVSLNGNHAVRLPLMECVQMTQDVQKAMDERRFQDAVRLRGRSFAGNLNTYKRLAIKLPDDQIPKTNCNVAVINVGAPAAGMNAAVRSAVRVGIADGHRMLAIYDGFDGFAKGQIKEIGWTDVGGWTGQGGSILGTKRVLPGKYLEEIATQMRTHSINALLIIGGFEAYLGLLELSAAREKHEEFCVPMVMVPATVSNNVPGSDFSIGADTALNTITDTCDRIKQSASGTKRRVFIIETMGGYCGYLANMGGLAAGADAAYIFEEPFDIRDLQSSVEHLTEKMKTTIQRGLVLRNESCSENYTTDFIYQLYSEEGKGVFDCRKNVLGHMQQGGAPSPFDRNFGTKISARAMEWITAKLKETRGRGKKFTTDDSVCVLGISKRNVIFQPVAELKKQTDFEHRIPKEQWWLKLRPLMKILAKYKASYDVSDSGQLEHVQPWSV</sequence>
<evidence type="ECO:0000250" key="1"/>
<evidence type="ECO:0000250" key="2">
    <source>
        <dbReference type="UniProtKB" id="P47859"/>
    </source>
</evidence>
<evidence type="ECO:0000250" key="3">
    <source>
        <dbReference type="UniProtKB" id="P47860"/>
    </source>
</evidence>
<evidence type="ECO:0000250" key="4">
    <source>
        <dbReference type="UniProtKB" id="Q01813"/>
    </source>
</evidence>
<evidence type="ECO:0000255" key="5">
    <source>
        <dbReference type="HAMAP-Rule" id="MF_03184"/>
    </source>
</evidence>
<evidence type="ECO:0000305" key="6"/>
<keyword id="KW-0007">Acetylation</keyword>
<keyword id="KW-0021">Allosteric enzyme</keyword>
<keyword id="KW-0067">ATP-binding</keyword>
<keyword id="KW-0963">Cytoplasm</keyword>
<keyword id="KW-0324">Glycolysis</keyword>
<keyword id="KW-0325">Glycoprotein</keyword>
<keyword id="KW-0418">Kinase</keyword>
<keyword id="KW-0460">Magnesium</keyword>
<keyword id="KW-0479">Metal-binding</keyword>
<keyword id="KW-0547">Nucleotide-binding</keyword>
<keyword id="KW-0597">Phosphoprotein</keyword>
<keyword id="KW-1185">Reference proteome</keyword>
<keyword id="KW-0808">Transferase</keyword>
<dbReference type="EC" id="2.7.1.11" evidence="5"/>
<dbReference type="EMBL" id="CR860660">
    <property type="protein sequence ID" value="CAH92780.1"/>
    <property type="molecule type" value="mRNA"/>
</dbReference>
<dbReference type="RefSeq" id="NP_001126622.1">
    <property type="nucleotide sequence ID" value="NM_001133150.1"/>
</dbReference>
<dbReference type="SMR" id="Q5R636"/>
<dbReference type="FunCoup" id="Q5R636">
    <property type="interactions" value="2496"/>
</dbReference>
<dbReference type="STRING" id="9601.ENSPPYP00000002366"/>
<dbReference type="GlyCosmos" id="Q5R636">
    <property type="glycosylation" value="1 site, No reported glycans"/>
</dbReference>
<dbReference type="GeneID" id="100173619"/>
<dbReference type="KEGG" id="pon:100173619"/>
<dbReference type="CTD" id="5214"/>
<dbReference type="eggNOG" id="KOG2440">
    <property type="taxonomic scope" value="Eukaryota"/>
</dbReference>
<dbReference type="InParanoid" id="Q5R636"/>
<dbReference type="OrthoDB" id="537915at2759"/>
<dbReference type="UniPathway" id="UPA00109">
    <property type="reaction ID" value="UER00182"/>
</dbReference>
<dbReference type="Proteomes" id="UP000001595">
    <property type="component" value="Unplaced"/>
</dbReference>
<dbReference type="GO" id="GO:0005945">
    <property type="term" value="C:6-phosphofructokinase complex"/>
    <property type="evidence" value="ECO:0007669"/>
    <property type="project" value="TreeGrafter"/>
</dbReference>
<dbReference type="GO" id="GO:0016020">
    <property type="term" value="C:membrane"/>
    <property type="evidence" value="ECO:0007669"/>
    <property type="project" value="TreeGrafter"/>
</dbReference>
<dbReference type="GO" id="GO:0003872">
    <property type="term" value="F:6-phosphofructokinase activity"/>
    <property type="evidence" value="ECO:0000250"/>
    <property type="project" value="UniProtKB"/>
</dbReference>
<dbReference type="GO" id="GO:0016208">
    <property type="term" value="F:AMP binding"/>
    <property type="evidence" value="ECO:0007669"/>
    <property type="project" value="TreeGrafter"/>
</dbReference>
<dbReference type="GO" id="GO:0005524">
    <property type="term" value="F:ATP binding"/>
    <property type="evidence" value="ECO:0007669"/>
    <property type="project" value="UniProtKB-KW"/>
</dbReference>
<dbReference type="GO" id="GO:0070095">
    <property type="term" value="F:fructose-6-phosphate binding"/>
    <property type="evidence" value="ECO:0007669"/>
    <property type="project" value="TreeGrafter"/>
</dbReference>
<dbReference type="GO" id="GO:0042802">
    <property type="term" value="F:identical protein binding"/>
    <property type="evidence" value="ECO:0007669"/>
    <property type="project" value="TreeGrafter"/>
</dbReference>
<dbReference type="GO" id="GO:0046872">
    <property type="term" value="F:metal ion binding"/>
    <property type="evidence" value="ECO:0007669"/>
    <property type="project" value="UniProtKB-KW"/>
</dbReference>
<dbReference type="GO" id="GO:0048029">
    <property type="term" value="F:monosaccharide binding"/>
    <property type="evidence" value="ECO:0007669"/>
    <property type="project" value="TreeGrafter"/>
</dbReference>
<dbReference type="GO" id="GO:0061621">
    <property type="term" value="P:canonical glycolysis"/>
    <property type="evidence" value="ECO:0007669"/>
    <property type="project" value="TreeGrafter"/>
</dbReference>
<dbReference type="GO" id="GO:0030388">
    <property type="term" value="P:fructose 1,6-bisphosphate metabolic process"/>
    <property type="evidence" value="ECO:0007669"/>
    <property type="project" value="TreeGrafter"/>
</dbReference>
<dbReference type="GO" id="GO:0006002">
    <property type="term" value="P:fructose 6-phosphate metabolic process"/>
    <property type="evidence" value="ECO:0007669"/>
    <property type="project" value="InterPro"/>
</dbReference>
<dbReference type="CDD" id="cd00764">
    <property type="entry name" value="Eukaryotic_PFK"/>
    <property type="match status" value="1"/>
</dbReference>
<dbReference type="FunFam" id="3.40.50.450:FF:000004">
    <property type="entry name" value="ATP-dependent 6-phosphofructokinase"/>
    <property type="match status" value="1"/>
</dbReference>
<dbReference type="FunFam" id="3.40.50.460:FF:000001">
    <property type="entry name" value="ATP-dependent 6-phosphofructokinase"/>
    <property type="match status" value="1"/>
</dbReference>
<dbReference type="FunFam" id="3.40.50.460:FF:000003">
    <property type="entry name" value="ATP-dependent 6-phosphofructokinase"/>
    <property type="match status" value="1"/>
</dbReference>
<dbReference type="FunFam" id="3.40.50.450:FF:000043">
    <property type="entry name" value="ATP-dependent 6-phosphofructokinase, platelet type"/>
    <property type="match status" value="1"/>
</dbReference>
<dbReference type="FunFam" id="3.40.50.450:FF:000064">
    <property type="entry name" value="Phosphofructokinase, platelet b"/>
    <property type="match status" value="1"/>
</dbReference>
<dbReference type="Gene3D" id="3.40.50.450">
    <property type="match status" value="2"/>
</dbReference>
<dbReference type="Gene3D" id="3.40.50.460">
    <property type="entry name" value="Phosphofructokinase domain"/>
    <property type="match status" value="2"/>
</dbReference>
<dbReference type="HAMAP" id="MF_03184">
    <property type="entry name" value="Phosphofructokinase_I_E"/>
    <property type="match status" value="1"/>
</dbReference>
<dbReference type="InterPro" id="IPR009161">
    <property type="entry name" value="6-Pfructokinase_euk"/>
</dbReference>
<dbReference type="InterPro" id="IPR022953">
    <property type="entry name" value="ATP_PFK"/>
</dbReference>
<dbReference type="InterPro" id="IPR041914">
    <property type="entry name" value="PFK_vert-type"/>
</dbReference>
<dbReference type="InterPro" id="IPR015912">
    <property type="entry name" value="Phosphofructokinase_CS"/>
</dbReference>
<dbReference type="InterPro" id="IPR000023">
    <property type="entry name" value="Phosphofructokinase_dom"/>
</dbReference>
<dbReference type="InterPro" id="IPR035966">
    <property type="entry name" value="PKF_sf"/>
</dbReference>
<dbReference type="NCBIfam" id="TIGR02478">
    <property type="entry name" value="6PF1K_euk"/>
    <property type="match status" value="1"/>
</dbReference>
<dbReference type="PANTHER" id="PTHR13697:SF5">
    <property type="entry name" value="ATP-DEPENDENT 6-PHOSPHOFRUCTOKINASE, PLATELET TYPE"/>
    <property type="match status" value="1"/>
</dbReference>
<dbReference type="PANTHER" id="PTHR13697">
    <property type="entry name" value="PHOSPHOFRUCTOKINASE"/>
    <property type="match status" value="1"/>
</dbReference>
<dbReference type="Pfam" id="PF00365">
    <property type="entry name" value="PFK"/>
    <property type="match status" value="2"/>
</dbReference>
<dbReference type="PIRSF" id="PIRSF000533">
    <property type="entry name" value="ATP_PFK_euk"/>
    <property type="match status" value="1"/>
</dbReference>
<dbReference type="PRINTS" id="PR00476">
    <property type="entry name" value="PHFRCTKINASE"/>
</dbReference>
<dbReference type="SUPFAM" id="SSF53784">
    <property type="entry name" value="Phosphofructokinase"/>
    <property type="match status" value="2"/>
</dbReference>
<dbReference type="PROSITE" id="PS00433">
    <property type="entry name" value="PHOSPHOFRUCTOKINASE"/>
    <property type="match status" value="2"/>
</dbReference>
<protein>
    <recommendedName>
        <fullName evidence="5">ATP-dependent 6-phosphofructokinase, platelet type</fullName>
        <shortName evidence="5">ATP-PFK</shortName>
        <shortName>PFK-P</shortName>
        <ecNumber evidence="5">2.7.1.11</ecNumber>
    </recommendedName>
    <alternativeName>
        <fullName>6-phosphofructokinase type C</fullName>
    </alternativeName>
    <alternativeName>
        <fullName>Phosphofructo-1-kinase isozyme C</fullName>
        <shortName>PFK-C</shortName>
    </alternativeName>
    <alternativeName>
        <fullName evidence="5">Phosphohexokinase</fullName>
    </alternativeName>
</protein>
<reference key="1">
    <citation type="submission" date="2004-11" db="EMBL/GenBank/DDBJ databases">
        <authorList>
            <consortium name="The German cDNA consortium"/>
        </authorList>
    </citation>
    <scope>NUCLEOTIDE SEQUENCE [LARGE SCALE MRNA]</scope>
    <source>
        <tissue>Brain cortex</tissue>
    </source>
</reference>
<comment type="function">
    <text evidence="5">Catalyzes the phosphorylation of D-fructose 6-phosphate to fructose 1,6-bisphosphate by ATP, the first committing step of glycolysis.</text>
</comment>
<comment type="catalytic activity">
    <reaction evidence="5">
        <text>beta-D-fructose 6-phosphate + ATP = beta-D-fructose 1,6-bisphosphate + ADP + H(+)</text>
        <dbReference type="Rhea" id="RHEA:16109"/>
        <dbReference type="ChEBI" id="CHEBI:15378"/>
        <dbReference type="ChEBI" id="CHEBI:30616"/>
        <dbReference type="ChEBI" id="CHEBI:32966"/>
        <dbReference type="ChEBI" id="CHEBI:57634"/>
        <dbReference type="ChEBI" id="CHEBI:456216"/>
        <dbReference type="EC" id="2.7.1.11"/>
    </reaction>
</comment>
<comment type="cofactor">
    <cofactor evidence="5">
        <name>Mg(2+)</name>
        <dbReference type="ChEBI" id="CHEBI:18420"/>
    </cofactor>
</comment>
<comment type="activity regulation">
    <text evidence="5">Allosterically activated by ADP, AMP, or fructose 2,6-bisphosphate, and allosterically inhibited by ATP or citrate.</text>
</comment>
<comment type="pathway">
    <text evidence="5">Carbohydrate degradation; glycolysis; D-glyceraldehyde 3-phosphate and glycerone phosphate from D-glucose: step 3/4.</text>
</comment>
<comment type="subunit">
    <text evidence="5 6">Homo- and heterotetramers (By similarity). Phosphofructokinase (PFK) enzyme functions as a tetramer composed of different combinations of 3 types of subunits, called PFKM (M), PFKL (L) and PFKP (P). The composition of the PFK tetramer differs according to the tissue type it is present in. The kinetic and regulatory properties of the tetrameric enzyme are dependent on the subunit composition, hence can vary across tissues (Probable). Interacts with ATG4B; promoting phosphorylation of ATG4B.</text>
</comment>
<comment type="subcellular location">
    <subcellularLocation>
        <location evidence="5">Cytoplasm</location>
    </subcellularLocation>
</comment>
<comment type="PTM">
    <text evidence="1">GlcNAcylation decreases enzyme activity.</text>
</comment>
<comment type="PTM">
    <text evidence="4">Phosphorylation at Ser-386 promotes interaction with ATG4B.</text>
</comment>
<comment type="similarity">
    <text evidence="5">Belongs to the phosphofructokinase type A (PFKA) family. ATP-dependent PFK group I subfamily. Eukaryotic two domain clade 'E' sub-subfamily.</text>
</comment>
<organism>
    <name type="scientific">Pongo abelii</name>
    <name type="common">Sumatran orangutan</name>
    <name type="synonym">Pongo pygmaeus abelii</name>
    <dbReference type="NCBI Taxonomy" id="9601"/>
    <lineage>
        <taxon>Eukaryota</taxon>
        <taxon>Metazoa</taxon>
        <taxon>Chordata</taxon>
        <taxon>Craniata</taxon>
        <taxon>Vertebrata</taxon>
        <taxon>Euteleostomi</taxon>
        <taxon>Mammalia</taxon>
        <taxon>Eutheria</taxon>
        <taxon>Euarchontoglires</taxon>
        <taxon>Primates</taxon>
        <taxon>Haplorrhini</taxon>
        <taxon>Catarrhini</taxon>
        <taxon>Hominidae</taxon>
        <taxon>Pongo</taxon>
    </lineage>
</organism>